<comment type="function">
    <text evidence="1 3">Cytokine that induces the release of T-cell-attracting chemokines from monocytes and, in particular, enhances the maturation of CD11c(+) dendritic cells. Can induce allergic inflammation by directly activating mast cells (By similarity).</text>
</comment>
<comment type="subunit">
    <text evidence="4">Interacts with a receptor composed of CRLF2 and IL7R. Binding of TSLP to CRLF2/TSLPR is a mechanistic prerequisite for recruitment of IL7R to the high-affinity ternary complex.</text>
</comment>
<comment type="interaction">
    <interactant intactId="EBI-16096402">
        <id>Q9JIE6</id>
    </interactant>
    <interactant intactId="EBI-15887886">
        <id>Q8CII9</id>
        <label>Crlf2</label>
    </interactant>
    <organismsDiffer>false</organismsDiffer>
    <experiments>9</experiments>
</comment>
<comment type="subcellular location">
    <subcellularLocation>
        <location evidence="3">Secreted</location>
    </subcellularLocation>
</comment>
<keyword id="KW-0002">3D-structure</keyword>
<keyword id="KW-0202">Cytokine</keyword>
<keyword id="KW-1015">Disulfide bond</keyword>
<keyword id="KW-0325">Glycoprotein</keyword>
<keyword id="KW-1185">Reference proteome</keyword>
<keyword id="KW-0964">Secreted</keyword>
<keyword id="KW-0732">Signal</keyword>
<evidence type="ECO:0000250" key="1"/>
<evidence type="ECO:0000255" key="2"/>
<evidence type="ECO:0000269" key="3">
    <source>
    </source>
</evidence>
<evidence type="ECO:0000269" key="4">
    <source>
    </source>
</evidence>
<evidence type="ECO:0007829" key="5">
    <source>
        <dbReference type="PDB" id="4NN5"/>
    </source>
</evidence>
<gene>
    <name type="primary">Tslp</name>
</gene>
<protein>
    <recommendedName>
        <fullName>Thymic stromal lymphopoietin</fullName>
    </recommendedName>
    <alternativeName>
        <fullName>Thymic stroma-derived lymphopoietin</fullName>
    </alternativeName>
</protein>
<proteinExistence type="evidence at protein level"/>
<organism>
    <name type="scientific">Mus musculus</name>
    <name type="common">Mouse</name>
    <dbReference type="NCBI Taxonomy" id="10090"/>
    <lineage>
        <taxon>Eukaryota</taxon>
        <taxon>Metazoa</taxon>
        <taxon>Chordata</taxon>
        <taxon>Craniata</taxon>
        <taxon>Vertebrata</taxon>
        <taxon>Euteleostomi</taxon>
        <taxon>Mammalia</taxon>
        <taxon>Eutheria</taxon>
        <taxon>Euarchontoglires</taxon>
        <taxon>Glires</taxon>
        <taxon>Rodentia</taxon>
        <taxon>Myomorpha</taxon>
        <taxon>Muroidea</taxon>
        <taxon>Muridae</taxon>
        <taxon>Murinae</taxon>
        <taxon>Mus</taxon>
        <taxon>Mus</taxon>
    </lineage>
</organism>
<feature type="signal peptide" evidence="2">
    <location>
        <begin position="1"/>
        <end position="19"/>
    </location>
</feature>
<feature type="chain" id="PRO_0000300874" description="Thymic stromal lymphopoietin">
    <location>
        <begin position="20"/>
        <end position="140"/>
    </location>
</feature>
<feature type="site" description="Inserts into a conserved IL7R hydrophobic pocket, important for IL7R-binding" evidence="4">
    <location>
        <position position="37"/>
    </location>
</feature>
<feature type="glycosylation site" description="N-linked (GlcNAc...) asparagine" evidence="2">
    <location>
        <position position="21"/>
    </location>
</feature>
<feature type="glycosylation site" description="N-linked (GlcNAc...) asparagine" evidence="2">
    <location>
        <position position="26"/>
    </location>
</feature>
<feature type="glycosylation site" description="N-linked (GlcNAc...) asparagine" evidence="2">
    <location>
        <position position="123"/>
    </location>
</feature>
<feature type="disulfide bond" evidence="4">
    <location>
        <begin position="25"/>
        <end position="98"/>
    </location>
</feature>
<feature type="disulfide bond" evidence="4">
    <location>
        <begin position="57"/>
        <end position="63"/>
    </location>
</feature>
<feature type="disulfide bond" evidence="4">
    <location>
        <begin position="78"/>
        <end position="121"/>
    </location>
</feature>
<feature type="helix" evidence="5">
    <location>
        <begin position="22"/>
        <end position="24"/>
    </location>
</feature>
<feature type="helix" evidence="5">
    <location>
        <begin position="27"/>
        <end position="36"/>
    </location>
</feature>
<feature type="helix" evidence="5">
    <location>
        <begin position="38"/>
        <end position="46"/>
    </location>
</feature>
<feature type="helix" evidence="5">
    <location>
        <begin position="60"/>
        <end position="72"/>
    </location>
</feature>
<feature type="helix" evidence="5">
    <location>
        <begin position="81"/>
        <end position="83"/>
    </location>
</feature>
<feature type="helix" evidence="5">
    <location>
        <begin position="85"/>
        <end position="97"/>
    </location>
</feature>
<feature type="helix" evidence="5">
    <location>
        <begin position="118"/>
        <end position="137"/>
    </location>
</feature>
<sequence length="140" mass="16152">MVLLRSLFILQVLVRMGLTYNFSNCNFTSITKIYCNIIFHDLTGDLKGAKFEQIEDCESKPACLLKIEYYTLNPIPGCPSLPDKTFARRTREALNDHCPGYPETERNDGTQEMAQEVQNICLNQTSQILRLWYSFMQSPE</sequence>
<reference key="1">
    <citation type="journal article" date="2000" name="J. Exp. Med.">
        <title>Molecular cloning and biological characterization of a novel murine lymphoid growth factor.</title>
        <authorList>
            <person name="Sims J.E."/>
            <person name="Williams D.E."/>
            <person name="Morrissey P.J."/>
            <person name="Garka K."/>
            <person name="Foxworthe D."/>
            <person name="Price V."/>
            <person name="Friend S.L."/>
            <person name="Farr A."/>
            <person name="Bedell M.A."/>
            <person name="Jenkins N.A."/>
            <person name="Copeland N.G."/>
            <person name="Grabstein K."/>
            <person name="Paxton R.J."/>
        </authorList>
    </citation>
    <scope>NUCLEOTIDE SEQUENCE [MRNA]</scope>
    <scope>SUBCELLULAR LOCATION</scope>
    <scope>FUNCTION</scope>
    <source>
        <strain>BALB/cJ</strain>
    </source>
</reference>
<reference key="2">
    <citation type="journal article" date="2004" name="Genome Res.">
        <title>The status, quality, and expansion of the NIH full-length cDNA project: the Mammalian Gene Collection (MGC).</title>
        <authorList>
            <consortium name="The MGC Project Team"/>
        </authorList>
    </citation>
    <scope>NUCLEOTIDE SEQUENCE [LARGE SCALE MRNA]</scope>
</reference>
<reference key="3">
    <citation type="journal article" date="2014" name="Nat. Struct. Mol. Biol.">
        <title>Structural basis of the proinflammatory signaling complex mediated by TSLP.</title>
        <authorList>
            <person name="Verstraete K."/>
            <person name="van Schie L."/>
            <person name="Vyncke L."/>
            <person name="Bloch Y."/>
            <person name="Tavernier J."/>
            <person name="Pauwels E."/>
            <person name="Peelman F."/>
            <person name="Savvides S.N."/>
        </authorList>
    </citation>
    <scope>X-RAY CRYSTALLOGRAPHY (1.9 ANGSTROMS) OF 20-140 IN COMPLEX WITH IL7R AND CRLF2</scope>
    <scope>SUBUNIT</scope>
    <scope>DISULFIDE BONDS</scope>
</reference>
<accession>Q9JIE6</accession>
<name>TSLP_MOUSE</name>
<dbReference type="EMBL" id="AF232937">
    <property type="protein sequence ID" value="AAF81677.1"/>
    <property type="molecule type" value="mRNA"/>
</dbReference>
<dbReference type="EMBL" id="BC130230">
    <property type="protein sequence ID" value="AAI30231.1"/>
    <property type="molecule type" value="mRNA"/>
</dbReference>
<dbReference type="CCDS" id="CCDS29121.1"/>
<dbReference type="RefSeq" id="NP_067342.1">
    <property type="nucleotide sequence ID" value="NM_021367.2"/>
</dbReference>
<dbReference type="PDB" id="4NN5">
    <property type="method" value="X-ray"/>
    <property type="resolution" value="1.90 A"/>
    <property type="chains" value="A=20-140"/>
</dbReference>
<dbReference type="PDB" id="4NN6">
    <property type="method" value="X-ray"/>
    <property type="resolution" value="2.54 A"/>
    <property type="chains" value="A=20-140"/>
</dbReference>
<dbReference type="PDB" id="4NN7">
    <property type="method" value="X-ray"/>
    <property type="resolution" value="3.78 A"/>
    <property type="chains" value="A=20-140"/>
</dbReference>
<dbReference type="PDBsum" id="4NN5"/>
<dbReference type="PDBsum" id="4NN6"/>
<dbReference type="PDBsum" id="4NN7"/>
<dbReference type="SMR" id="Q9JIE6"/>
<dbReference type="CORUM" id="Q9JIE6"/>
<dbReference type="DIP" id="DIP-60842N"/>
<dbReference type="FunCoup" id="Q9JIE6">
    <property type="interactions" value="434"/>
</dbReference>
<dbReference type="IntAct" id="Q9JIE6">
    <property type="interactions" value="2"/>
</dbReference>
<dbReference type="STRING" id="10090.ENSMUSP00000025237"/>
<dbReference type="GlyCosmos" id="Q9JIE6">
    <property type="glycosylation" value="3 sites, No reported glycans"/>
</dbReference>
<dbReference type="GlyGen" id="Q9JIE6">
    <property type="glycosylation" value="3 sites"/>
</dbReference>
<dbReference type="PhosphoSitePlus" id="Q9JIE6"/>
<dbReference type="PaxDb" id="10090-ENSMUSP00000025237"/>
<dbReference type="Antibodypedia" id="25309">
    <property type="antibodies" value="836 antibodies from 43 providers"/>
</dbReference>
<dbReference type="DNASU" id="53603"/>
<dbReference type="Ensembl" id="ENSMUST00000025237.5">
    <property type="protein sequence ID" value="ENSMUSP00000025237.4"/>
    <property type="gene ID" value="ENSMUSG00000024379.5"/>
</dbReference>
<dbReference type="GeneID" id="53603"/>
<dbReference type="KEGG" id="mmu:53603"/>
<dbReference type="UCSC" id="uc008ejl.2">
    <property type="organism name" value="mouse"/>
</dbReference>
<dbReference type="AGR" id="MGI:1855696"/>
<dbReference type="CTD" id="85480"/>
<dbReference type="MGI" id="MGI:1855696">
    <property type="gene designation" value="Tslp"/>
</dbReference>
<dbReference type="VEuPathDB" id="HostDB:ENSMUSG00000024379"/>
<dbReference type="eggNOG" id="ENOG502TEM0">
    <property type="taxonomic scope" value="Eukaryota"/>
</dbReference>
<dbReference type="GeneTree" id="ENSGT00390000012541"/>
<dbReference type="HOGENOM" id="CLU_143224_0_0_1"/>
<dbReference type="InParanoid" id="Q9JIE6"/>
<dbReference type="OMA" id="CLEQVSY"/>
<dbReference type="OrthoDB" id="9838157at2759"/>
<dbReference type="PhylomeDB" id="Q9JIE6"/>
<dbReference type="TreeFam" id="TF338216"/>
<dbReference type="Reactome" id="R-MMU-1266695">
    <property type="pathway name" value="Interleukin-7 signaling"/>
</dbReference>
<dbReference type="BioGRID-ORCS" id="53603">
    <property type="hits" value="1 hit in 75 CRISPR screens"/>
</dbReference>
<dbReference type="EvolutionaryTrace" id="Q9JIE6"/>
<dbReference type="PRO" id="PR:Q9JIE6"/>
<dbReference type="Proteomes" id="UP000000589">
    <property type="component" value="Chromosome 18"/>
</dbReference>
<dbReference type="RNAct" id="Q9JIE6">
    <property type="molecule type" value="protein"/>
</dbReference>
<dbReference type="Bgee" id="ENSMUSG00000024379">
    <property type="expression patterns" value="Expressed in ureter smooth muscle and 77 other cell types or tissues"/>
</dbReference>
<dbReference type="GO" id="GO:0005615">
    <property type="term" value="C:extracellular space"/>
    <property type="evidence" value="ECO:0000314"/>
    <property type="project" value="UniProt"/>
</dbReference>
<dbReference type="GO" id="GO:0005125">
    <property type="term" value="F:cytokine activity"/>
    <property type="evidence" value="ECO:0000314"/>
    <property type="project" value="MGI"/>
</dbReference>
<dbReference type="FunFam" id="1.20.1250.90:FF:000002">
    <property type="entry name" value="Thymic stromal lymphopoietin"/>
    <property type="match status" value="1"/>
</dbReference>
<dbReference type="Gene3D" id="1.20.1250.90">
    <property type="entry name" value="Thymic stromal lymphopoietin"/>
    <property type="match status" value="1"/>
</dbReference>
<dbReference type="InterPro" id="IPR029189">
    <property type="entry name" value="TSLP"/>
</dbReference>
<dbReference type="InterPro" id="IPR038329">
    <property type="entry name" value="TSLP_sf"/>
</dbReference>
<dbReference type="PANTHER" id="PTHR38003">
    <property type="entry name" value="THYMIC STROMAL LYMPHOPOIETIN"/>
    <property type="match status" value="1"/>
</dbReference>
<dbReference type="PANTHER" id="PTHR38003:SF1">
    <property type="entry name" value="THYMIC STROMAL LYMPHOPOIETIN"/>
    <property type="match status" value="1"/>
</dbReference>
<dbReference type="Pfam" id="PF15216">
    <property type="entry name" value="TSLP"/>
    <property type="match status" value="1"/>
</dbReference>